<gene>
    <name type="primary">nonC</name>
    <name type="synonym">Smg1</name>
    <name type="ORF">CG32743</name>
</gene>
<proteinExistence type="evidence at protein level"/>
<name>SMG1_DROME</name>
<keyword id="KW-0025">Alternative splicing</keyword>
<keyword id="KW-0067">ATP-binding</keyword>
<keyword id="KW-0963">Cytoplasm</keyword>
<keyword id="KW-0418">Kinase</keyword>
<keyword id="KW-0464">Manganese</keyword>
<keyword id="KW-0479">Metal-binding</keyword>
<keyword id="KW-0866">Nonsense-mediated mRNA decay</keyword>
<keyword id="KW-0547">Nucleotide-binding</keyword>
<keyword id="KW-0597">Phosphoprotein</keyword>
<keyword id="KW-1185">Reference proteome</keyword>
<keyword id="KW-0723">Serine/threonine-protein kinase</keyword>
<keyword id="KW-0808">Transferase</keyword>
<protein>
    <recommendedName>
        <fullName>Serine/threonine-protein kinase Smg1</fullName>
        <ecNumber>2.7.11.1</ecNumber>
    </recommendedName>
</protein>
<organism>
    <name type="scientific">Drosophila melanogaster</name>
    <name type="common">Fruit fly</name>
    <dbReference type="NCBI Taxonomy" id="7227"/>
    <lineage>
        <taxon>Eukaryota</taxon>
        <taxon>Metazoa</taxon>
        <taxon>Ecdysozoa</taxon>
        <taxon>Arthropoda</taxon>
        <taxon>Hexapoda</taxon>
        <taxon>Insecta</taxon>
        <taxon>Pterygota</taxon>
        <taxon>Neoptera</taxon>
        <taxon>Endopterygota</taxon>
        <taxon>Diptera</taxon>
        <taxon>Brachycera</taxon>
        <taxon>Muscomorpha</taxon>
        <taxon>Ephydroidea</taxon>
        <taxon>Drosophilidae</taxon>
        <taxon>Drosophila</taxon>
        <taxon>Sophophora</taxon>
    </lineage>
</organism>
<comment type="function">
    <text evidence="6 7">Serine/threonine protein kinase involved in mRNA surveillance. Recognizes the substrate consensus sequence [ST]-Q. Involved in nonsense-mediated decay (NMD) of mRNAs containing premature stop codons, probably by phosphorylating Upf1.</text>
</comment>
<comment type="catalytic activity">
    <reaction>
        <text>L-seryl-[protein] + ATP = O-phospho-L-seryl-[protein] + ADP + H(+)</text>
        <dbReference type="Rhea" id="RHEA:17989"/>
        <dbReference type="Rhea" id="RHEA-COMP:9863"/>
        <dbReference type="Rhea" id="RHEA-COMP:11604"/>
        <dbReference type="ChEBI" id="CHEBI:15378"/>
        <dbReference type="ChEBI" id="CHEBI:29999"/>
        <dbReference type="ChEBI" id="CHEBI:30616"/>
        <dbReference type="ChEBI" id="CHEBI:83421"/>
        <dbReference type="ChEBI" id="CHEBI:456216"/>
        <dbReference type="EC" id="2.7.11.1"/>
    </reaction>
</comment>
<comment type="catalytic activity">
    <reaction>
        <text>L-threonyl-[protein] + ATP = O-phospho-L-threonyl-[protein] + ADP + H(+)</text>
        <dbReference type="Rhea" id="RHEA:46608"/>
        <dbReference type="Rhea" id="RHEA-COMP:11060"/>
        <dbReference type="Rhea" id="RHEA-COMP:11605"/>
        <dbReference type="ChEBI" id="CHEBI:15378"/>
        <dbReference type="ChEBI" id="CHEBI:30013"/>
        <dbReference type="ChEBI" id="CHEBI:30616"/>
        <dbReference type="ChEBI" id="CHEBI:61977"/>
        <dbReference type="ChEBI" id="CHEBI:456216"/>
        <dbReference type="EC" id="2.7.11.1"/>
    </reaction>
</comment>
<comment type="cofactor">
    <cofactor evidence="1">
        <name>Mn(2+)</name>
        <dbReference type="ChEBI" id="CHEBI:29035"/>
    </cofactor>
</comment>
<comment type="subunit">
    <text evidence="1">Component of a post-splicing multiprotein NMD complex.</text>
</comment>
<comment type="subcellular location">
    <subcellularLocation>
        <location>Cytoplasm</location>
    </subcellularLocation>
</comment>
<comment type="alternative products">
    <event type="alternative splicing"/>
    <isoform>
        <id>Q70PP2-1</id>
        <name>1</name>
        <name>A</name>
        <sequence type="displayed"/>
    </isoform>
    <isoform>
        <id>Q70PP2-2</id>
        <name>2</name>
        <sequence type="described" ref="VSP_017754 VSP_017755"/>
    </isoform>
</comment>
<comment type="similarity">
    <text evidence="10">Belongs to the PI3/PI4-kinase family.</text>
</comment>
<comment type="caution">
    <text evidence="11">According to some authors (PubMed:15965240) it may not be directly involved in NMD, as mutants do not abolish NMD. However, other data clearly show its involvement in NMD (PubMed:12881430, PubMed:16199763).</text>
</comment>
<dbReference type="EC" id="2.7.11.1"/>
<dbReference type="EMBL" id="AJ556818">
    <property type="protein sequence ID" value="CAD89223.1"/>
    <property type="molecule type" value="mRNA"/>
</dbReference>
<dbReference type="EMBL" id="AE014298">
    <property type="protein sequence ID" value="AAF46207.2"/>
    <property type="molecule type" value="Genomic_DNA"/>
</dbReference>
<dbReference type="EMBL" id="BT011117">
    <property type="protein sequence ID" value="AAR82784.1"/>
    <property type="molecule type" value="mRNA"/>
</dbReference>
<dbReference type="RefSeq" id="NP_001284967.1">
    <molecule id="Q70PP2-1"/>
    <property type="nucleotide sequence ID" value="NM_001298038.1"/>
</dbReference>
<dbReference type="RefSeq" id="NP_727132.1">
    <molecule id="Q70PP2-1"/>
    <property type="nucleotide sequence ID" value="NM_167095.3"/>
</dbReference>
<dbReference type="BioGRID" id="58110">
    <property type="interactions" value="3"/>
</dbReference>
<dbReference type="FunCoup" id="Q70PP2">
    <property type="interactions" value="1541"/>
</dbReference>
<dbReference type="STRING" id="7227.FBpp0309979"/>
<dbReference type="iPTMnet" id="Q70PP2"/>
<dbReference type="PaxDb" id="7227-FBpp0070933"/>
<dbReference type="EnsemblMetazoa" id="FBtr0070972">
    <molecule id="Q70PP2-1"/>
    <property type="protein sequence ID" value="FBpp0070933"/>
    <property type="gene ID" value="FBgn0263968"/>
</dbReference>
<dbReference type="EnsemblMetazoa" id="FBtr0343321">
    <molecule id="Q70PP2-1"/>
    <property type="protein sequence ID" value="FBpp0309979"/>
    <property type="gene ID" value="FBgn0263968"/>
</dbReference>
<dbReference type="GeneID" id="31625"/>
<dbReference type="KEGG" id="dme:Dmel_CG32743"/>
<dbReference type="AGR" id="FB:FBgn0263968"/>
<dbReference type="CTD" id="31625"/>
<dbReference type="FlyBase" id="FBgn0263968">
    <property type="gene designation" value="nonC"/>
</dbReference>
<dbReference type="VEuPathDB" id="VectorBase:FBgn0263968"/>
<dbReference type="eggNOG" id="KOG0891">
    <property type="taxonomic scope" value="Eukaryota"/>
</dbReference>
<dbReference type="HOGENOM" id="CLU_000316_0_0_1"/>
<dbReference type="InParanoid" id="Q70PP2"/>
<dbReference type="OMA" id="AFECHFT"/>
<dbReference type="OrthoDB" id="10065496at2759"/>
<dbReference type="PhylomeDB" id="Q70PP2"/>
<dbReference type="Reactome" id="R-DME-975957">
    <property type="pathway name" value="Nonsense Mediated Decay (NMD) enhanced by the Exon Junction Complex (EJC)"/>
</dbReference>
<dbReference type="SignaLink" id="Q70PP2"/>
<dbReference type="BioGRID-ORCS" id="31625">
    <property type="hits" value="1 hit in 1 CRISPR screen"/>
</dbReference>
<dbReference type="GenomeRNAi" id="31625"/>
<dbReference type="PRO" id="PR:Q70PP2"/>
<dbReference type="Proteomes" id="UP000000803">
    <property type="component" value="Chromosome X"/>
</dbReference>
<dbReference type="Bgee" id="FBgn0263968">
    <property type="expression patterns" value="Expressed in enteroblast (Drosophila) in digestive tract and 107 other cell types or tissues"/>
</dbReference>
<dbReference type="ExpressionAtlas" id="Q70PP2">
    <property type="expression patterns" value="baseline and differential"/>
</dbReference>
<dbReference type="GO" id="GO:0005737">
    <property type="term" value="C:cytoplasm"/>
    <property type="evidence" value="ECO:0000250"/>
    <property type="project" value="UniProtKB"/>
</dbReference>
<dbReference type="GO" id="GO:0005634">
    <property type="term" value="C:nucleus"/>
    <property type="evidence" value="ECO:0000250"/>
    <property type="project" value="UniProtKB"/>
</dbReference>
<dbReference type="GO" id="GO:0045202">
    <property type="term" value="C:synapse"/>
    <property type="evidence" value="ECO:0007669"/>
    <property type="project" value="GOC"/>
</dbReference>
<dbReference type="GO" id="GO:0038201">
    <property type="term" value="C:TOR complex"/>
    <property type="evidence" value="ECO:0000318"/>
    <property type="project" value="GO_Central"/>
</dbReference>
<dbReference type="GO" id="GO:0005524">
    <property type="term" value="F:ATP binding"/>
    <property type="evidence" value="ECO:0007669"/>
    <property type="project" value="UniProtKB-KW"/>
</dbReference>
<dbReference type="GO" id="GO:0046872">
    <property type="term" value="F:metal ion binding"/>
    <property type="evidence" value="ECO:0007669"/>
    <property type="project" value="UniProtKB-KW"/>
</dbReference>
<dbReference type="GO" id="GO:0106310">
    <property type="term" value="F:protein serine kinase activity"/>
    <property type="evidence" value="ECO:0007669"/>
    <property type="project" value="RHEA"/>
</dbReference>
<dbReference type="GO" id="GO:0004674">
    <property type="term" value="F:protein serine/threonine kinase activity"/>
    <property type="evidence" value="ECO:0000250"/>
    <property type="project" value="UniProtKB"/>
</dbReference>
<dbReference type="GO" id="GO:0006974">
    <property type="term" value="P:DNA damage response"/>
    <property type="evidence" value="ECO:0000250"/>
    <property type="project" value="UniProtKB"/>
</dbReference>
<dbReference type="GO" id="GO:0016242">
    <property type="term" value="P:negative regulation of macroautophagy"/>
    <property type="evidence" value="ECO:0000318"/>
    <property type="project" value="GO_Central"/>
</dbReference>
<dbReference type="GO" id="GO:0007274">
    <property type="term" value="P:neuromuscular synaptic transmission"/>
    <property type="evidence" value="ECO:0000314"/>
    <property type="project" value="FlyBase"/>
</dbReference>
<dbReference type="GO" id="GO:0000184">
    <property type="term" value="P:nuclear-transcribed mRNA catabolic process, nonsense-mediated decay"/>
    <property type="evidence" value="ECO:0000314"/>
    <property type="project" value="FlyBase"/>
</dbReference>
<dbReference type="GO" id="GO:0018105">
    <property type="term" value="P:peptidyl-serine phosphorylation"/>
    <property type="evidence" value="ECO:0000250"/>
    <property type="project" value="UniProtKB"/>
</dbReference>
<dbReference type="GO" id="GO:0046777">
    <property type="term" value="P:protein autophosphorylation"/>
    <property type="evidence" value="ECO:0000250"/>
    <property type="project" value="UniProtKB"/>
</dbReference>
<dbReference type="GO" id="GO:0050808">
    <property type="term" value="P:synapse organization"/>
    <property type="evidence" value="ECO:0000314"/>
    <property type="project" value="FlyBase"/>
</dbReference>
<dbReference type="GO" id="GO:0048489">
    <property type="term" value="P:synaptic vesicle transport"/>
    <property type="evidence" value="ECO:0000314"/>
    <property type="project" value="FlyBase"/>
</dbReference>
<dbReference type="GO" id="GO:0031929">
    <property type="term" value="P:TOR signaling"/>
    <property type="evidence" value="ECO:0000318"/>
    <property type="project" value="GO_Central"/>
</dbReference>
<dbReference type="CDD" id="cd05170">
    <property type="entry name" value="PIKKc_SMG1"/>
    <property type="match status" value="1"/>
</dbReference>
<dbReference type="FunFam" id="3.30.1010.10:FF:000026">
    <property type="entry name" value="Serine/threonine-protein kinase smg-1"/>
    <property type="match status" value="1"/>
</dbReference>
<dbReference type="FunFam" id="1.10.1070.11:FF:000023">
    <property type="entry name" value="serine/threonine-protein kinase SMG1 isoform X1"/>
    <property type="match status" value="1"/>
</dbReference>
<dbReference type="Gene3D" id="1.10.1070.11">
    <property type="entry name" value="Phosphatidylinositol 3-/4-kinase, catalytic domain"/>
    <property type="match status" value="1"/>
</dbReference>
<dbReference type="Gene3D" id="3.30.1010.10">
    <property type="entry name" value="Phosphatidylinositol 3-kinase Catalytic Subunit, Chain A, domain 4"/>
    <property type="match status" value="1"/>
</dbReference>
<dbReference type="InterPro" id="IPR016024">
    <property type="entry name" value="ARM-type_fold"/>
</dbReference>
<dbReference type="InterPro" id="IPR050517">
    <property type="entry name" value="DDR_Repair_Kinase"/>
</dbReference>
<dbReference type="InterPro" id="IPR003152">
    <property type="entry name" value="FATC_dom"/>
</dbReference>
<dbReference type="InterPro" id="IPR011009">
    <property type="entry name" value="Kinase-like_dom_sf"/>
</dbReference>
<dbReference type="InterPro" id="IPR000403">
    <property type="entry name" value="PI3/4_kinase_cat_dom"/>
</dbReference>
<dbReference type="InterPro" id="IPR036940">
    <property type="entry name" value="PI3/4_kinase_cat_sf"/>
</dbReference>
<dbReference type="InterPro" id="IPR014009">
    <property type="entry name" value="PIK_FAT"/>
</dbReference>
<dbReference type="InterPro" id="IPR031559">
    <property type="entry name" value="SMG1"/>
</dbReference>
<dbReference type="InterPro" id="IPR039414">
    <property type="entry name" value="SMG1_PIKKc"/>
</dbReference>
<dbReference type="PANTHER" id="PTHR11139">
    <property type="entry name" value="ATAXIA TELANGIECTASIA MUTATED ATM -RELATED"/>
    <property type="match status" value="1"/>
</dbReference>
<dbReference type="PANTHER" id="PTHR11139:SF119">
    <property type="entry name" value="SERINE_THREONINE-PROTEIN KINASE SMG1"/>
    <property type="match status" value="1"/>
</dbReference>
<dbReference type="Pfam" id="PF02260">
    <property type="entry name" value="FATC"/>
    <property type="match status" value="1"/>
</dbReference>
<dbReference type="Pfam" id="PF00454">
    <property type="entry name" value="PI3_PI4_kinase"/>
    <property type="match status" value="1"/>
</dbReference>
<dbReference type="Pfam" id="PF15785">
    <property type="entry name" value="SMG1"/>
    <property type="match status" value="1"/>
</dbReference>
<dbReference type="SMART" id="SM01343">
    <property type="entry name" value="FATC"/>
    <property type="match status" value="1"/>
</dbReference>
<dbReference type="SMART" id="SM00146">
    <property type="entry name" value="PI3Kc"/>
    <property type="match status" value="1"/>
</dbReference>
<dbReference type="SMART" id="SM01345">
    <property type="entry name" value="Rapamycin_bind"/>
    <property type="match status" value="1"/>
</dbReference>
<dbReference type="SUPFAM" id="SSF48371">
    <property type="entry name" value="ARM repeat"/>
    <property type="match status" value="1"/>
</dbReference>
<dbReference type="SUPFAM" id="SSF56112">
    <property type="entry name" value="Protein kinase-like (PK-like)"/>
    <property type="match status" value="1"/>
</dbReference>
<dbReference type="PROSITE" id="PS51189">
    <property type="entry name" value="FAT"/>
    <property type="match status" value="1"/>
</dbReference>
<dbReference type="PROSITE" id="PS51190">
    <property type="entry name" value="FATC"/>
    <property type="match status" value="1"/>
</dbReference>
<dbReference type="PROSITE" id="PS50290">
    <property type="entry name" value="PI3_4_KINASE_3"/>
    <property type="match status" value="1"/>
</dbReference>
<accession>Q70PP2</accession>
<accession>Q6NP14</accession>
<accession>Q9W3V6</accession>
<evidence type="ECO:0000250" key="1"/>
<evidence type="ECO:0000255" key="2">
    <source>
        <dbReference type="PROSITE-ProRule" id="PRU00269"/>
    </source>
</evidence>
<evidence type="ECO:0000255" key="3">
    <source>
        <dbReference type="PROSITE-ProRule" id="PRU00534"/>
    </source>
</evidence>
<evidence type="ECO:0000255" key="4">
    <source>
        <dbReference type="PROSITE-ProRule" id="PRU00535"/>
    </source>
</evidence>
<evidence type="ECO:0000256" key="5">
    <source>
        <dbReference type="SAM" id="MobiDB-lite"/>
    </source>
</evidence>
<evidence type="ECO:0000269" key="6">
    <source>
    </source>
</evidence>
<evidence type="ECO:0000269" key="7">
    <source>
    </source>
</evidence>
<evidence type="ECO:0000269" key="8">
    <source>
    </source>
</evidence>
<evidence type="ECO:0000303" key="9">
    <source>
    </source>
</evidence>
<evidence type="ECO:0000305" key="10"/>
<evidence type="ECO:0000305" key="11">
    <source>
    </source>
</evidence>
<feature type="chain" id="PRO_0000229795" description="Serine/threonine-protein kinase Smg1">
    <location>
        <begin position="1"/>
        <end position="3218"/>
    </location>
</feature>
<feature type="domain" description="FAT" evidence="3">
    <location>
        <begin position="1289"/>
        <end position="1692"/>
    </location>
</feature>
<feature type="repeat" description="HEAT">
    <location>
        <begin position="1643"/>
        <end position="1678"/>
    </location>
</feature>
<feature type="domain" description="PI3K/PI4K catalytic" evidence="2">
    <location>
        <begin position="1897"/>
        <end position="2232"/>
    </location>
</feature>
<feature type="domain" description="FATC" evidence="3 4">
    <location>
        <begin position="3186"/>
        <end position="3218"/>
    </location>
</feature>
<feature type="region of interest" description="Disordered" evidence="5">
    <location>
        <begin position="32"/>
        <end position="78"/>
    </location>
</feature>
<feature type="region of interest" description="G-loop" evidence="2">
    <location>
        <begin position="1903"/>
        <end position="1909"/>
    </location>
</feature>
<feature type="region of interest" description="Catalytic loop" evidence="2">
    <location>
        <begin position="2101"/>
        <end position="2109"/>
    </location>
</feature>
<feature type="region of interest" description="Activation loop" evidence="2">
    <location>
        <begin position="2121"/>
        <end position="2145"/>
    </location>
</feature>
<feature type="compositionally biased region" description="Low complexity" evidence="5">
    <location>
        <begin position="33"/>
        <end position="43"/>
    </location>
</feature>
<feature type="compositionally biased region" description="Gly residues" evidence="5">
    <location>
        <begin position="44"/>
        <end position="67"/>
    </location>
</feature>
<feature type="modified residue" description="Phosphoserine" evidence="8">
    <location>
        <position position="70"/>
    </location>
</feature>
<feature type="splice variant" id="VSP_017754" description="In isoform 2." evidence="9">
    <original>GPFR</original>
    <variation>KRCS</variation>
    <location>
        <begin position="2159"/>
        <end position="2162"/>
    </location>
</feature>
<feature type="splice variant" id="VSP_017755" description="In isoform 2." evidence="9">
    <location>
        <begin position="2163"/>
        <end position="3218"/>
    </location>
</feature>
<reference key="1">
    <citation type="journal article" date="2003" name="EMBO J.">
        <title>Nonsense-mediated mRNA decay in Drosophila: at the intersection of the yeast and mammalian pathways.</title>
        <authorList>
            <person name="Gatfield D."/>
            <person name="Ciccarelli F.D."/>
            <person name="Bork P."/>
            <person name="Izaurralde E."/>
        </authorList>
    </citation>
    <scope>NUCLEOTIDE SEQUENCE [MRNA] (ISOFORM 2)</scope>
    <scope>FUNCTION</scope>
</reference>
<reference key="2">
    <citation type="journal article" date="2000" name="Science">
        <title>The genome sequence of Drosophila melanogaster.</title>
        <authorList>
            <person name="Adams M.D."/>
            <person name="Celniker S.E."/>
            <person name="Holt R.A."/>
            <person name="Evans C.A."/>
            <person name="Gocayne J.D."/>
            <person name="Amanatides P.G."/>
            <person name="Scherer S.E."/>
            <person name="Li P.W."/>
            <person name="Hoskins R.A."/>
            <person name="Galle R.F."/>
            <person name="George R.A."/>
            <person name="Lewis S.E."/>
            <person name="Richards S."/>
            <person name="Ashburner M."/>
            <person name="Henderson S.N."/>
            <person name="Sutton G.G."/>
            <person name="Wortman J.R."/>
            <person name="Yandell M.D."/>
            <person name="Zhang Q."/>
            <person name="Chen L.X."/>
            <person name="Brandon R.C."/>
            <person name="Rogers Y.-H.C."/>
            <person name="Blazej R.G."/>
            <person name="Champe M."/>
            <person name="Pfeiffer B.D."/>
            <person name="Wan K.H."/>
            <person name="Doyle C."/>
            <person name="Baxter E.G."/>
            <person name="Helt G."/>
            <person name="Nelson C.R."/>
            <person name="Miklos G.L.G."/>
            <person name="Abril J.F."/>
            <person name="Agbayani A."/>
            <person name="An H.-J."/>
            <person name="Andrews-Pfannkoch C."/>
            <person name="Baldwin D."/>
            <person name="Ballew R.M."/>
            <person name="Basu A."/>
            <person name="Baxendale J."/>
            <person name="Bayraktaroglu L."/>
            <person name="Beasley E.M."/>
            <person name="Beeson K.Y."/>
            <person name="Benos P.V."/>
            <person name="Berman B.P."/>
            <person name="Bhandari D."/>
            <person name="Bolshakov S."/>
            <person name="Borkova D."/>
            <person name="Botchan M.R."/>
            <person name="Bouck J."/>
            <person name="Brokstein P."/>
            <person name="Brottier P."/>
            <person name="Burtis K.C."/>
            <person name="Busam D.A."/>
            <person name="Butler H."/>
            <person name="Cadieu E."/>
            <person name="Center A."/>
            <person name="Chandra I."/>
            <person name="Cherry J.M."/>
            <person name="Cawley S."/>
            <person name="Dahlke C."/>
            <person name="Davenport L.B."/>
            <person name="Davies P."/>
            <person name="de Pablos B."/>
            <person name="Delcher A."/>
            <person name="Deng Z."/>
            <person name="Mays A.D."/>
            <person name="Dew I."/>
            <person name="Dietz S.M."/>
            <person name="Dodson K."/>
            <person name="Doup L.E."/>
            <person name="Downes M."/>
            <person name="Dugan-Rocha S."/>
            <person name="Dunkov B.C."/>
            <person name="Dunn P."/>
            <person name="Durbin K.J."/>
            <person name="Evangelista C.C."/>
            <person name="Ferraz C."/>
            <person name="Ferriera S."/>
            <person name="Fleischmann W."/>
            <person name="Fosler C."/>
            <person name="Gabrielian A.E."/>
            <person name="Garg N.S."/>
            <person name="Gelbart W.M."/>
            <person name="Glasser K."/>
            <person name="Glodek A."/>
            <person name="Gong F."/>
            <person name="Gorrell J.H."/>
            <person name="Gu Z."/>
            <person name="Guan P."/>
            <person name="Harris M."/>
            <person name="Harris N.L."/>
            <person name="Harvey D.A."/>
            <person name="Heiman T.J."/>
            <person name="Hernandez J.R."/>
            <person name="Houck J."/>
            <person name="Hostin D."/>
            <person name="Houston K.A."/>
            <person name="Howland T.J."/>
            <person name="Wei M.-H."/>
            <person name="Ibegwam C."/>
            <person name="Jalali M."/>
            <person name="Kalush F."/>
            <person name="Karpen G.H."/>
            <person name="Ke Z."/>
            <person name="Kennison J.A."/>
            <person name="Ketchum K.A."/>
            <person name="Kimmel B.E."/>
            <person name="Kodira C.D."/>
            <person name="Kraft C.L."/>
            <person name="Kravitz S."/>
            <person name="Kulp D."/>
            <person name="Lai Z."/>
            <person name="Lasko P."/>
            <person name="Lei Y."/>
            <person name="Levitsky A.A."/>
            <person name="Li J.H."/>
            <person name="Li Z."/>
            <person name="Liang Y."/>
            <person name="Lin X."/>
            <person name="Liu X."/>
            <person name="Mattei B."/>
            <person name="McIntosh T.C."/>
            <person name="McLeod M.P."/>
            <person name="McPherson D."/>
            <person name="Merkulov G."/>
            <person name="Milshina N.V."/>
            <person name="Mobarry C."/>
            <person name="Morris J."/>
            <person name="Moshrefi A."/>
            <person name="Mount S.M."/>
            <person name="Moy M."/>
            <person name="Murphy B."/>
            <person name="Murphy L."/>
            <person name="Muzny D.M."/>
            <person name="Nelson D.L."/>
            <person name="Nelson D.R."/>
            <person name="Nelson K.A."/>
            <person name="Nixon K."/>
            <person name="Nusskern D.R."/>
            <person name="Pacleb J.M."/>
            <person name="Palazzolo M."/>
            <person name="Pittman G.S."/>
            <person name="Pan S."/>
            <person name="Pollard J."/>
            <person name="Puri V."/>
            <person name="Reese M.G."/>
            <person name="Reinert K."/>
            <person name="Remington K."/>
            <person name="Saunders R.D.C."/>
            <person name="Scheeler F."/>
            <person name="Shen H."/>
            <person name="Shue B.C."/>
            <person name="Siden-Kiamos I."/>
            <person name="Simpson M."/>
            <person name="Skupski M.P."/>
            <person name="Smith T.J."/>
            <person name="Spier E."/>
            <person name="Spradling A.C."/>
            <person name="Stapleton M."/>
            <person name="Strong R."/>
            <person name="Sun E."/>
            <person name="Svirskas R."/>
            <person name="Tector C."/>
            <person name="Turner R."/>
            <person name="Venter E."/>
            <person name="Wang A.H."/>
            <person name="Wang X."/>
            <person name="Wang Z.-Y."/>
            <person name="Wassarman D.A."/>
            <person name="Weinstock G.M."/>
            <person name="Weissenbach J."/>
            <person name="Williams S.M."/>
            <person name="Woodage T."/>
            <person name="Worley K.C."/>
            <person name="Wu D."/>
            <person name="Yang S."/>
            <person name="Yao Q.A."/>
            <person name="Ye J."/>
            <person name="Yeh R.-F."/>
            <person name="Zaveri J.S."/>
            <person name="Zhan M."/>
            <person name="Zhang G."/>
            <person name="Zhao Q."/>
            <person name="Zheng L."/>
            <person name="Zheng X.H."/>
            <person name="Zhong F.N."/>
            <person name="Zhong W."/>
            <person name="Zhou X."/>
            <person name="Zhu S.C."/>
            <person name="Zhu X."/>
            <person name="Smith H.O."/>
            <person name="Gibbs R.A."/>
            <person name="Myers E.W."/>
            <person name="Rubin G.M."/>
            <person name="Venter J.C."/>
        </authorList>
    </citation>
    <scope>NUCLEOTIDE SEQUENCE [LARGE SCALE GENOMIC DNA]</scope>
    <source>
        <strain>Berkeley</strain>
    </source>
</reference>
<reference key="3">
    <citation type="journal article" date="2002" name="Genome Biol.">
        <title>Annotation of the Drosophila melanogaster euchromatic genome: a systematic review.</title>
        <authorList>
            <person name="Misra S."/>
            <person name="Crosby M.A."/>
            <person name="Mungall C.J."/>
            <person name="Matthews B.B."/>
            <person name="Campbell K.S."/>
            <person name="Hradecky P."/>
            <person name="Huang Y."/>
            <person name="Kaminker J.S."/>
            <person name="Millburn G.H."/>
            <person name="Prochnik S.E."/>
            <person name="Smith C.D."/>
            <person name="Tupy J.L."/>
            <person name="Whitfield E.J."/>
            <person name="Bayraktaroglu L."/>
            <person name="Berman B.P."/>
            <person name="Bettencourt B.R."/>
            <person name="Celniker S.E."/>
            <person name="de Grey A.D.N.J."/>
            <person name="Drysdale R.A."/>
            <person name="Harris N.L."/>
            <person name="Richter J."/>
            <person name="Russo S."/>
            <person name="Schroeder A.J."/>
            <person name="Shu S.Q."/>
            <person name="Stapleton M."/>
            <person name="Yamada C."/>
            <person name="Ashburner M."/>
            <person name="Gelbart W.M."/>
            <person name="Rubin G.M."/>
            <person name="Lewis S.E."/>
        </authorList>
    </citation>
    <scope>GENOME REANNOTATION</scope>
    <scope>ALTERNATIVE SPLICING</scope>
    <source>
        <strain>Berkeley</strain>
    </source>
</reference>
<reference key="4">
    <citation type="submission" date="2003-12" db="EMBL/GenBank/DDBJ databases">
        <authorList>
            <person name="Stapleton M."/>
            <person name="Brokstein P."/>
            <person name="Hong L."/>
            <person name="Agbayani A."/>
            <person name="Carlson J.W."/>
            <person name="Champe M."/>
            <person name="Chavez C."/>
            <person name="Dorsett V."/>
            <person name="Dresnek D."/>
            <person name="Farfan D."/>
            <person name="Frise E."/>
            <person name="George R.A."/>
            <person name="Gonzalez M."/>
            <person name="Guarin H."/>
            <person name="Kronmiller B."/>
            <person name="Li P.W."/>
            <person name="Liao G."/>
            <person name="Miranda A."/>
            <person name="Mungall C.J."/>
            <person name="Nunoo J."/>
            <person name="Pacleb J.M."/>
            <person name="Paragas V."/>
            <person name="Park S."/>
            <person name="Patel S."/>
            <person name="Phouanenavong S."/>
            <person name="Wan K.H."/>
            <person name="Yu C."/>
            <person name="Lewis S.E."/>
            <person name="Rubin G.M."/>
            <person name="Celniker S.E."/>
        </authorList>
    </citation>
    <scope>NUCLEOTIDE SEQUENCE [LARGE SCALE MRNA] OF 2062-3218 (ISOFORM 1)</scope>
    <source>
        <strain>Berkeley</strain>
        <tissue>Embryo</tissue>
    </source>
</reference>
<reference key="5">
    <citation type="journal article" date="2005" name="Genetics">
        <title>Smg1 nonsense mutations do not abolish nonsense-mediated mRNA decay in Drosophila melanogaster.</title>
        <authorList>
            <person name="Chen Z."/>
            <person name="Smith K.R."/>
            <person name="Batterham P."/>
            <person name="Robin C."/>
        </authorList>
    </citation>
    <scope>POSSIBLE LACK OF INVOLVEMENT IN NONSENSE-MEDIATED MRNA DECAY</scope>
</reference>
<reference key="6">
    <citation type="journal article" date="2005" name="RNA">
        <title>Nonsense-mediated mRNA decay factors act in concert to regulate common mRNA targets.</title>
        <authorList>
            <person name="Rehwinkel J."/>
            <person name="Letunic I."/>
            <person name="Raes J."/>
            <person name="Bork P."/>
            <person name="Izaurralde E."/>
        </authorList>
    </citation>
    <scope>FUNCTION</scope>
</reference>
<reference key="7">
    <citation type="journal article" date="2008" name="J. Proteome Res.">
        <title>Phosphoproteome analysis of Drosophila melanogaster embryos.</title>
        <authorList>
            <person name="Zhai B."/>
            <person name="Villen J."/>
            <person name="Beausoleil S.A."/>
            <person name="Mintseris J."/>
            <person name="Gygi S.P."/>
        </authorList>
    </citation>
    <scope>PHOSPHORYLATION [LARGE SCALE ANALYSIS] AT SER-70</scope>
    <scope>IDENTIFICATION BY MASS SPECTROMETRY</scope>
    <source>
        <tissue>Embryo</tissue>
    </source>
</reference>
<sequence>MKNAIHPENCNGAGTEEEASSAFHAEIDRVLLNNNGNHGDSSNEGGGGNGSGRGGATGSGNIAGLGGSESMWSPGGGKSHDVAQAFANALLLRNMNHVVGKGQPVVQNHRKAYQCKGDTINPMANGEDLRLSKIIRRLINENNPTVSLELCSKLDQAVRTPINMGYMTCSFVWILDNMLTLYKQCPPPVLEECSKTLGLIGFINRKSYPIYEEFIVKNYKSSKRMQKYMIMALRATLSCDTKCELHMYADKIMLLLKDFLENAESADIFIVVSNTLVQFAASYAETFECHFTDVVDIVIGWQLEAGQPTDLKTHCAQVLEQLTPFFSKQIDFSYGLLDQFVEDITTLEEGEPANTAERVGAFVGAFNTLLKCLARMQIFVGMPTCECIVKMAVDHLIKIMPTLHLNTEALVNINELICICLLNNFTGLDPILLEQVLLDQVKRMISLTELQRQSVLYLLLCTVRRLRARLTPSLVHFIFQSNPYMTKVRLRSPGETSYKLLLRTCQETLLIRNVPLLQQAYKYLVDDIDACLEKLLITAPRSKARKASVLLVFHLSALAALAKQTSSIIGMYACKPSILELLLTNCRAHELKFWSKYPAAQQAIFGLLVVHCQANHNFRTNSSLLRDQELSAENTSPTANSFASILRFLDSVLGQAHQLAPQNLRVLLQWIQMLLRECREKIDLLMEQENFRGICRNIAATASKLVPLESAACIQTVLDYGLERLEKYPKLLILYRDTALQQLQMLSTNYHAPYFQIYAQLPLHLTLTGGESSMPGMASRRVSVWQQRISQYSAVRDNVFRDFFDRVQKPEQDSLIHCLRELFVRSCQVAPQDERQMNLSQCTKRCQRLAIAWLQFEAARYCVDQRLRTTVGKPQETFLGFEAIIMRHARLLSGCAKEIERSALDDLSLEELLSMQSNLSLLLGFLDALEKLIYNAAEGSAFALRPPEKQVAAFFRLNNPTCQSWFNRIRIGVVIIAMHVQQPELVIRYAQQILVNSKTQDPTYSQAIVYMAWSLVSCQEADSLRGLRLWARGKSCKSYKWLKYAADQAAGKRESALAGYRTILAEKELQSELEPHTRQFVVSQMMQCLQDLGQWSQLVELKQQQMTRPEDRELNPFLQRSNVEVNALERLLAKSEESCSSMDALGGVFQQLSLWPSNWDESVSSSGLSERASFSSIHMRQRTEDIVLHKLLEDRCVPDQAKNLLDTQWRDSLLNPSFDQRSCKELTLLRHIVQGVSGGQELSLLPVSSGRCQNRSKFISSAILMRCLAWTQLLRQHCAPGSWETLCLDAAAAAREEGNLQLAETLLTQFFGQPIGEIAALFSLEQGVQTDNPEMLRGYSELVKCLHLQQQQSQTHSGDLSSSIDVCAALCLNIQKSNNQPAAGADLLLNLADWIAVRTCNGLTTNQSPVLIQLLDQLPECPLTCDSSQPLAIPQAERMVARLVHSCLQQRPNYAEALIAYGNWCYRWGKKVADSCCVLTQADATAISQALDIPQPLESEKLDELLQALSTEQPPANCVEVCPDAARARDDEAAKNRLRRLTFLADKTPEALDAILQIWRRAIANTYDYYKDAARSYFQYLSFKSGSGPEKPEGEGVVSQRERLHVDDSNLVTTTLRLLRLIVKHASGLQEVLEQGLHTTPIAPWKVIIPQLFSRLNHHEPYVRKSVCDLLCRLAKSRPQLVIFPAVVGANREQQDATAPPATARPTTEDACCYGYLLGELSKQAPEAVQHVKLMVKELRRVCLLWDEYWIHSLAHIYNTYVSRVSALATDFRPDDHEGKNNRFNVWRPQLLADLEALVAVTSRPPETTYERSFRKRFDAPIRLTVDALRHRRYPEAWDKLKQLYHILQSNMIRGSGSTLKMQSISPVLCGIGRMRISMPGLDAHGPDGDQVYIESVESSVCVLPTKTKPKKVAFYGSNGQRYTFLFKGMEDLHLDERIMQFLSISNAIMACRSDAPGNGCYRAHHYSVIPLGPQSGLISWVDGVTPVFALYKKWQQRRSQVAGNAGAGAVANVPRRFTDLFYNKLSPLLAKHNMQVSDPRRQWPISVLLQVLDELSQETPNDLLARELWCQAGNAAEWRQSVRRFVRCMSVMSMIGYVIGLGDRHLDNVLINLGSGDIVHIDYNVCFEKGRTLRIPEKVPFRLTQNLVQAMGITGIEGPFRLGCEYVLKVMRKERETLLTLLEAFVYDPLVDWTTNDDAQALRRSLNAKLQESADGGGAGGLGVGDLKYHKKDKNKGKPLDSDVKRQPFLSKLGMLQKYWSTNKTELMPQLEEMEQEVGNLQAAQAKQVVAEEELVKLNQRSALIAEIKSLGTAIESHSFNTASLRNAVRRGHSEALALLSTERLPDFGRVQCILRSYGQCLQLYHLLDLQGQLVKLQMESNSENAREFSALTEALQLSGLDSMRSQLNELLGRMDMVAQKSSKHLQEYAGVMNFYPEQSHRQNLFVRFHDSFATYIQNGYTADSTTNTNSPSSSIICKADVVGVAEAMEYSWERLGCQLHEASKLYAANQAQALTLGAPTTALLSMIVQSGCSQLLLKASLVRTLDRAGGAFAAYEQVALASHDDGLLHHQLLFIHLVRTMLQGVLVMTKEEDQHLAQLESLLSALSHLKKMFEYDLPANLYRLLLLQPNLGKLSALCHLSASSLAQLFLEATMENGHKPPDQFPVERRFLLTLQPVYDQFLLASTSLDSLVSSMQSMLEDVHDVQTQQIMELGLMRSCHTELNDECFFGLVSEALESSRTCDVREMARPMLGFIHRLQVEKLAGLLPILTRNFYTAVGPQCLPTASCGDPAQADHLCESLFISLQSDGALLQQQAEIALLSQQVDLHTLAASAQYWAYSEALGSQLRCGPHIVSRPKLTAAIGECWLELDQKLTALQQLQAGLESQLSQLQTQRSNWNRNHIDNLLRMEQCNKQRTMSHVALLQKMTDGAGAVARLEQNAIVVGEEGQALVDHLEQWLAAHGQWQASSSRISAVEQSMVELLDPEGAIDHYWLENVQGLLEEQTCKVHREIAAIEGEQQSKHRFICTLLKETLRLLENMPRFHVQSLCSEAQAQGQGKMEYANVQLLSDHLREGQGLMQSLYMRLQELRKDICSDRRVLQPSMLQNWRHQLEMILTLAKQEVNEFFKGLEDFMQHAGETDSYEIFTHAKGSGNVHEQKRNAYGVSVWKKIRMKLEGRDPDSNQRSTVAEQVDYVIREACNPENLAVLYEGWTPWV</sequence>